<organism>
    <name type="scientific">Prochlorococcus marinus (strain MIT 9313)</name>
    <dbReference type="NCBI Taxonomy" id="74547"/>
    <lineage>
        <taxon>Bacteria</taxon>
        <taxon>Bacillati</taxon>
        <taxon>Cyanobacteriota</taxon>
        <taxon>Cyanophyceae</taxon>
        <taxon>Synechococcales</taxon>
        <taxon>Prochlorococcaceae</taxon>
        <taxon>Prochlorococcus</taxon>
    </lineage>
</organism>
<comment type="function">
    <text evidence="1">Catalyzes the NADPH-dependent reduction of L-glutamate 5-phosphate into L-glutamate 5-semialdehyde and phosphate. The product spontaneously undergoes cyclization to form 1-pyrroline-5-carboxylate.</text>
</comment>
<comment type="catalytic activity">
    <reaction evidence="1">
        <text>L-glutamate 5-semialdehyde + phosphate + NADP(+) = L-glutamyl 5-phosphate + NADPH + H(+)</text>
        <dbReference type="Rhea" id="RHEA:19541"/>
        <dbReference type="ChEBI" id="CHEBI:15378"/>
        <dbReference type="ChEBI" id="CHEBI:43474"/>
        <dbReference type="ChEBI" id="CHEBI:57783"/>
        <dbReference type="ChEBI" id="CHEBI:58066"/>
        <dbReference type="ChEBI" id="CHEBI:58274"/>
        <dbReference type="ChEBI" id="CHEBI:58349"/>
        <dbReference type="EC" id="1.2.1.41"/>
    </reaction>
</comment>
<comment type="pathway">
    <text evidence="1">Amino-acid biosynthesis; L-proline biosynthesis; L-glutamate 5-semialdehyde from L-glutamate: step 2/2.</text>
</comment>
<comment type="subcellular location">
    <subcellularLocation>
        <location evidence="1">Cytoplasm</location>
    </subcellularLocation>
</comment>
<comment type="similarity">
    <text evidence="1">Belongs to the gamma-glutamyl phosphate reductase family.</text>
</comment>
<name>PROA_PROMM</name>
<reference key="1">
    <citation type="journal article" date="2003" name="Nature">
        <title>Genome divergence in two Prochlorococcus ecotypes reflects oceanic niche differentiation.</title>
        <authorList>
            <person name="Rocap G."/>
            <person name="Larimer F.W."/>
            <person name="Lamerdin J.E."/>
            <person name="Malfatti S."/>
            <person name="Chain P."/>
            <person name="Ahlgren N.A."/>
            <person name="Arellano A."/>
            <person name="Coleman M."/>
            <person name="Hauser L."/>
            <person name="Hess W.R."/>
            <person name="Johnson Z.I."/>
            <person name="Land M.L."/>
            <person name="Lindell D."/>
            <person name="Post A.F."/>
            <person name="Regala W."/>
            <person name="Shah M."/>
            <person name="Shaw S.L."/>
            <person name="Steglich C."/>
            <person name="Sullivan M.B."/>
            <person name="Ting C.S."/>
            <person name="Tolonen A."/>
            <person name="Webb E.A."/>
            <person name="Zinser E.R."/>
            <person name="Chisholm S.W."/>
        </authorList>
    </citation>
    <scope>NUCLEOTIDE SEQUENCE [LARGE SCALE GENOMIC DNA]</scope>
    <source>
        <strain>MIT 9313</strain>
    </source>
</reference>
<accession>Q7V8C3</accession>
<protein>
    <recommendedName>
        <fullName evidence="1">Gamma-glutamyl phosphate reductase</fullName>
        <shortName evidence="1">GPR</shortName>
        <ecNumber evidence="1">1.2.1.41</ecNumber>
    </recommendedName>
    <alternativeName>
        <fullName evidence="1">Glutamate-5-semialdehyde dehydrogenase</fullName>
    </alternativeName>
    <alternativeName>
        <fullName evidence="1">Glutamyl-gamma-semialdehyde dehydrogenase</fullName>
        <shortName evidence="1">GSA dehydrogenase</shortName>
    </alternativeName>
</protein>
<keyword id="KW-0028">Amino-acid biosynthesis</keyword>
<keyword id="KW-0963">Cytoplasm</keyword>
<keyword id="KW-0521">NADP</keyword>
<keyword id="KW-0560">Oxidoreductase</keyword>
<keyword id="KW-0641">Proline biosynthesis</keyword>
<keyword id="KW-1185">Reference proteome</keyword>
<sequence>MTTSPGVPEPSAQLLRLAAEVRQAAMALGQSDDNQRRKALMAMANALLSSSEQIVRANQLDLEKARTEGLASALMARLRLDESKLNSAIEGLRQLAQLTDPLGLRQLHRELDQDLVLERITVPLGVLGVIFEARPDAVIQITSLAIRSGNGALLKGGSEASHTNQAIIEALKNGLAETEIDPEAIALLKTRQESLALLRLDGLVDLIIPRGSNELVRFIQDNTRIPVLGHADGICHLYLDAAADLKQALQIAIDSKTQYPAACNSIETLLIHQSIAPSFLELAIPAFLQAGVRLLGDSASRALGVEESASEEDWATEYLDLILSVKVVPDLEGALDHIRRYSSRHTEAIVSNDQETAERFLQAVDSAGVFHNCSTRFADGFRYGFGAEVGISTQTLPPRGPVGLEGLVTYRYRLRGQGHIVADYANGECMFTHRDLPL</sequence>
<gene>
    <name evidence="1" type="primary">proA</name>
    <name type="ordered locus">PMT_0436</name>
</gene>
<evidence type="ECO:0000255" key="1">
    <source>
        <dbReference type="HAMAP-Rule" id="MF_00412"/>
    </source>
</evidence>
<feature type="chain" id="PRO_0000189765" description="Gamma-glutamyl phosphate reductase">
    <location>
        <begin position="1"/>
        <end position="438"/>
    </location>
</feature>
<dbReference type="EC" id="1.2.1.41" evidence="1"/>
<dbReference type="EMBL" id="BX548175">
    <property type="protein sequence ID" value="CAE20611.1"/>
    <property type="molecule type" value="Genomic_DNA"/>
</dbReference>
<dbReference type="RefSeq" id="WP_011129815.1">
    <property type="nucleotide sequence ID" value="NC_005071.1"/>
</dbReference>
<dbReference type="SMR" id="Q7V8C3"/>
<dbReference type="KEGG" id="pmt:PMT_0436"/>
<dbReference type="eggNOG" id="COG0014">
    <property type="taxonomic scope" value="Bacteria"/>
</dbReference>
<dbReference type="HOGENOM" id="CLU_030231_0_1_3"/>
<dbReference type="OrthoDB" id="9809970at2"/>
<dbReference type="UniPathway" id="UPA00098">
    <property type="reaction ID" value="UER00360"/>
</dbReference>
<dbReference type="Proteomes" id="UP000001423">
    <property type="component" value="Chromosome"/>
</dbReference>
<dbReference type="GO" id="GO:0005737">
    <property type="term" value="C:cytoplasm"/>
    <property type="evidence" value="ECO:0007669"/>
    <property type="project" value="UniProtKB-SubCell"/>
</dbReference>
<dbReference type="GO" id="GO:0004350">
    <property type="term" value="F:glutamate-5-semialdehyde dehydrogenase activity"/>
    <property type="evidence" value="ECO:0007669"/>
    <property type="project" value="UniProtKB-UniRule"/>
</dbReference>
<dbReference type="GO" id="GO:0050661">
    <property type="term" value="F:NADP binding"/>
    <property type="evidence" value="ECO:0007669"/>
    <property type="project" value="InterPro"/>
</dbReference>
<dbReference type="GO" id="GO:0055129">
    <property type="term" value="P:L-proline biosynthetic process"/>
    <property type="evidence" value="ECO:0007669"/>
    <property type="project" value="UniProtKB-UniRule"/>
</dbReference>
<dbReference type="CDD" id="cd07079">
    <property type="entry name" value="ALDH_F18-19_ProA-GPR"/>
    <property type="match status" value="1"/>
</dbReference>
<dbReference type="FunFam" id="3.40.309.10:FF:000006">
    <property type="entry name" value="Gamma-glutamyl phosphate reductase"/>
    <property type="match status" value="1"/>
</dbReference>
<dbReference type="Gene3D" id="3.40.605.10">
    <property type="entry name" value="Aldehyde Dehydrogenase, Chain A, domain 1"/>
    <property type="match status" value="1"/>
</dbReference>
<dbReference type="Gene3D" id="3.40.309.10">
    <property type="entry name" value="Aldehyde Dehydrogenase, Chain A, domain 2"/>
    <property type="match status" value="1"/>
</dbReference>
<dbReference type="HAMAP" id="MF_00412">
    <property type="entry name" value="ProA"/>
    <property type="match status" value="1"/>
</dbReference>
<dbReference type="InterPro" id="IPR016161">
    <property type="entry name" value="Ald_DH/histidinol_DH"/>
</dbReference>
<dbReference type="InterPro" id="IPR016163">
    <property type="entry name" value="Ald_DH_C"/>
</dbReference>
<dbReference type="InterPro" id="IPR016162">
    <property type="entry name" value="Ald_DH_N"/>
</dbReference>
<dbReference type="InterPro" id="IPR015590">
    <property type="entry name" value="Aldehyde_DH_dom"/>
</dbReference>
<dbReference type="InterPro" id="IPR020593">
    <property type="entry name" value="G-glutamylP_reductase_CS"/>
</dbReference>
<dbReference type="InterPro" id="IPR012134">
    <property type="entry name" value="Glu-5-SA_DH"/>
</dbReference>
<dbReference type="InterPro" id="IPR000965">
    <property type="entry name" value="GPR_dom"/>
</dbReference>
<dbReference type="NCBIfam" id="NF001221">
    <property type="entry name" value="PRK00197.1"/>
    <property type="match status" value="1"/>
</dbReference>
<dbReference type="NCBIfam" id="TIGR00407">
    <property type="entry name" value="proA"/>
    <property type="match status" value="1"/>
</dbReference>
<dbReference type="PANTHER" id="PTHR11063:SF8">
    <property type="entry name" value="DELTA-1-PYRROLINE-5-CARBOXYLATE SYNTHASE"/>
    <property type="match status" value="1"/>
</dbReference>
<dbReference type="PANTHER" id="PTHR11063">
    <property type="entry name" value="GLUTAMATE SEMIALDEHYDE DEHYDROGENASE"/>
    <property type="match status" value="1"/>
</dbReference>
<dbReference type="Pfam" id="PF00171">
    <property type="entry name" value="Aldedh"/>
    <property type="match status" value="1"/>
</dbReference>
<dbReference type="PIRSF" id="PIRSF000151">
    <property type="entry name" value="GPR"/>
    <property type="match status" value="1"/>
</dbReference>
<dbReference type="SUPFAM" id="SSF53720">
    <property type="entry name" value="ALDH-like"/>
    <property type="match status" value="1"/>
</dbReference>
<dbReference type="PROSITE" id="PS01223">
    <property type="entry name" value="PROA"/>
    <property type="match status" value="1"/>
</dbReference>
<proteinExistence type="inferred from homology"/>